<sequence>MRFDLEPPSSVAAAHRIGVLLINLGTPDAPTPRAVRRYLAEFLSDPRVVEIPQAVWQVLLRTLILPLRGRASAKKYAAVWMPEGSPLRVYTERQTDSVRHLLTSNGYHVMVDYAMRYGSPNISHALTQFKRAGVERVLLMPMYPQYSASTTATTFDAAFDALARMRNQPEVRTVRHYADHPAYIHALAEQVRQYWAQHGRPDFAAGDKLVLSFHGVPKRTLDLGDPYHDQCQQTGALLMAALGLSTTECRVTFQSRFGKAEWLQPYTAPTLREFGEAGVRRADVFCPGFTADCLETIEEIGMEVRDEFLAGGGTTFHRIPCLNGASAWIGALSEIVAENLQGWPVKAAQPEPVN</sequence>
<comment type="function">
    <text evidence="1">Catalyzes the ferrous insertion into protoporphyrin IX.</text>
</comment>
<comment type="catalytic activity">
    <reaction evidence="1">
        <text>heme b + 2 H(+) = protoporphyrin IX + Fe(2+)</text>
        <dbReference type="Rhea" id="RHEA:22584"/>
        <dbReference type="ChEBI" id="CHEBI:15378"/>
        <dbReference type="ChEBI" id="CHEBI:29033"/>
        <dbReference type="ChEBI" id="CHEBI:57306"/>
        <dbReference type="ChEBI" id="CHEBI:60344"/>
        <dbReference type="EC" id="4.98.1.1"/>
    </reaction>
</comment>
<comment type="pathway">
    <text evidence="1">Porphyrin-containing compound metabolism; protoheme biosynthesis; protoheme from protoporphyrin-IX: step 1/1.</text>
</comment>
<comment type="subcellular location">
    <subcellularLocation>
        <location evidence="1">Cytoplasm</location>
    </subcellularLocation>
</comment>
<comment type="similarity">
    <text evidence="1">Belongs to the ferrochelatase family.</text>
</comment>
<keyword id="KW-0963">Cytoplasm</keyword>
<keyword id="KW-0350">Heme biosynthesis</keyword>
<keyword id="KW-0408">Iron</keyword>
<keyword id="KW-0456">Lyase</keyword>
<keyword id="KW-0479">Metal-binding</keyword>
<keyword id="KW-0627">Porphyrin biosynthesis</keyword>
<accession>A0K4S2</accession>
<feature type="chain" id="PRO_1000019277" description="Ferrochelatase">
    <location>
        <begin position="1"/>
        <end position="354"/>
    </location>
</feature>
<feature type="binding site" evidence="1">
    <location>
        <position position="214"/>
    </location>
    <ligand>
        <name>Fe cation</name>
        <dbReference type="ChEBI" id="CHEBI:24875"/>
    </ligand>
</feature>
<feature type="binding site" evidence="1">
    <location>
        <position position="295"/>
    </location>
    <ligand>
        <name>Fe cation</name>
        <dbReference type="ChEBI" id="CHEBI:24875"/>
    </ligand>
</feature>
<protein>
    <recommendedName>
        <fullName evidence="1">Ferrochelatase</fullName>
        <ecNumber evidence="1">4.98.1.1</ecNumber>
    </recommendedName>
    <alternativeName>
        <fullName evidence="1">Heme synthase</fullName>
    </alternativeName>
    <alternativeName>
        <fullName evidence="1">Protoheme ferro-lyase</fullName>
    </alternativeName>
</protein>
<dbReference type="EC" id="4.98.1.1" evidence="1"/>
<dbReference type="EMBL" id="CP000458">
    <property type="protein sequence ID" value="ABK07499.1"/>
    <property type="molecule type" value="Genomic_DNA"/>
</dbReference>
<dbReference type="RefSeq" id="WP_011694160.1">
    <property type="nucleotide sequence ID" value="NC_008542.1"/>
</dbReference>
<dbReference type="SMR" id="A0K4S2"/>
<dbReference type="KEGG" id="bch:Bcen2424_0746"/>
<dbReference type="HOGENOM" id="CLU_018884_0_0_4"/>
<dbReference type="UniPathway" id="UPA00252">
    <property type="reaction ID" value="UER00325"/>
</dbReference>
<dbReference type="GO" id="GO:0005737">
    <property type="term" value="C:cytoplasm"/>
    <property type="evidence" value="ECO:0007669"/>
    <property type="project" value="UniProtKB-SubCell"/>
</dbReference>
<dbReference type="GO" id="GO:0004325">
    <property type="term" value="F:ferrochelatase activity"/>
    <property type="evidence" value="ECO:0007669"/>
    <property type="project" value="UniProtKB-UniRule"/>
</dbReference>
<dbReference type="GO" id="GO:0046872">
    <property type="term" value="F:metal ion binding"/>
    <property type="evidence" value="ECO:0007669"/>
    <property type="project" value="UniProtKB-KW"/>
</dbReference>
<dbReference type="GO" id="GO:0006783">
    <property type="term" value="P:heme biosynthetic process"/>
    <property type="evidence" value="ECO:0007669"/>
    <property type="project" value="UniProtKB-UniRule"/>
</dbReference>
<dbReference type="CDD" id="cd00419">
    <property type="entry name" value="Ferrochelatase_C"/>
    <property type="match status" value="1"/>
</dbReference>
<dbReference type="CDD" id="cd03411">
    <property type="entry name" value="Ferrochelatase_N"/>
    <property type="match status" value="1"/>
</dbReference>
<dbReference type="FunFam" id="3.40.50.1400:FF:000002">
    <property type="entry name" value="Ferrochelatase"/>
    <property type="match status" value="1"/>
</dbReference>
<dbReference type="Gene3D" id="3.40.50.1400">
    <property type="match status" value="2"/>
</dbReference>
<dbReference type="HAMAP" id="MF_00323">
    <property type="entry name" value="Ferrochelatase"/>
    <property type="match status" value="1"/>
</dbReference>
<dbReference type="InterPro" id="IPR001015">
    <property type="entry name" value="Ferrochelatase"/>
</dbReference>
<dbReference type="InterPro" id="IPR019772">
    <property type="entry name" value="Ferrochelatase_AS"/>
</dbReference>
<dbReference type="InterPro" id="IPR033644">
    <property type="entry name" value="Ferrochelatase_C"/>
</dbReference>
<dbReference type="InterPro" id="IPR033659">
    <property type="entry name" value="Ferrochelatase_N"/>
</dbReference>
<dbReference type="NCBIfam" id="TIGR00109">
    <property type="entry name" value="hemH"/>
    <property type="match status" value="1"/>
</dbReference>
<dbReference type="PANTHER" id="PTHR11108">
    <property type="entry name" value="FERROCHELATASE"/>
    <property type="match status" value="1"/>
</dbReference>
<dbReference type="PANTHER" id="PTHR11108:SF1">
    <property type="entry name" value="FERROCHELATASE, MITOCHONDRIAL"/>
    <property type="match status" value="1"/>
</dbReference>
<dbReference type="Pfam" id="PF00762">
    <property type="entry name" value="Ferrochelatase"/>
    <property type="match status" value="1"/>
</dbReference>
<dbReference type="SUPFAM" id="SSF53800">
    <property type="entry name" value="Chelatase"/>
    <property type="match status" value="1"/>
</dbReference>
<dbReference type="PROSITE" id="PS00534">
    <property type="entry name" value="FERROCHELATASE"/>
    <property type="match status" value="1"/>
</dbReference>
<organism>
    <name type="scientific">Burkholderia cenocepacia (strain HI2424)</name>
    <dbReference type="NCBI Taxonomy" id="331272"/>
    <lineage>
        <taxon>Bacteria</taxon>
        <taxon>Pseudomonadati</taxon>
        <taxon>Pseudomonadota</taxon>
        <taxon>Betaproteobacteria</taxon>
        <taxon>Burkholderiales</taxon>
        <taxon>Burkholderiaceae</taxon>
        <taxon>Burkholderia</taxon>
        <taxon>Burkholderia cepacia complex</taxon>
    </lineage>
</organism>
<proteinExistence type="inferred from homology"/>
<evidence type="ECO:0000255" key="1">
    <source>
        <dbReference type="HAMAP-Rule" id="MF_00323"/>
    </source>
</evidence>
<gene>
    <name evidence="1" type="primary">hemH</name>
    <name type="ordered locus">Bcen2424_0746</name>
</gene>
<reference key="1">
    <citation type="submission" date="2006-08" db="EMBL/GenBank/DDBJ databases">
        <title>Complete sequence of chromosome 1 of Burkholderia cenocepacia HI2424.</title>
        <authorList>
            <person name="Copeland A."/>
            <person name="Lucas S."/>
            <person name="Lapidus A."/>
            <person name="Barry K."/>
            <person name="Detter J.C."/>
            <person name="Glavina del Rio T."/>
            <person name="Hammon N."/>
            <person name="Israni S."/>
            <person name="Pitluck S."/>
            <person name="Chain P."/>
            <person name="Malfatti S."/>
            <person name="Shin M."/>
            <person name="Vergez L."/>
            <person name="Schmutz J."/>
            <person name="Larimer F."/>
            <person name="Land M."/>
            <person name="Hauser L."/>
            <person name="Kyrpides N."/>
            <person name="Kim E."/>
            <person name="LiPuma J.J."/>
            <person name="Gonzalez C.F."/>
            <person name="Konstantinidis K."/>
            <person name="Tiedje J.M."/>
            <person name="Richardson P."/>
        </authorList>
    </citation>
    <scope>NUCLEOTIDE SEQUENCE [LARGE SCALE GENOMIC DNA]</scope>
    <source>
        <strain>HI2424</strain>
    </source>
</reference>
<name>HEMH_BURCH</name>